<dbReference type="EMBL" id="BA000034">
    <property type="protein sequence ID" value="BAC63141.1"/>
    <property type="molecule type" value="Genomic_DNA"/>
</dbReference>
<dbReference type="RefSeq" id="WP_000533765.1">
    <property type="nucleotide sequence ID" value="NC_004606.1"/>
</dbReference>
<dbReference type="SMR" id="P0DE83"/>
<dbReference type="GeneID" id="98392396"/>
<dbReference type="KEGG" id="sps:SPs0046"/>
<dbReference type="HOGENOM" id="CLU_144911_0_1_9"/>
<dbReference type="GO" id="GO:0005737">
    <property type="term" value="C:cytoplasm"/>
    <property type="evidence" value="ECO:0007669"/>
    <property type="project" value="UniProtKB-ARBA"/>
</dbReference>
<dbReference type="GO" id="GO:0015935">
    <property type="term" value="C:small ribosomal subunit"/>
    <property type="evidence" value="ECO:0007669"/>
    <property type="project" value="InterPro"/>
</dbReference>
<dbReference type="GO" id="GO:0019843">
    <property type="term" value="F:rRNA binding"/>
    <property type="evidence" value="ECO:0007669"/>
    <property type="project" value="UniProtKB-UniRule"/>
</dbReference>
<dbReference type="GO" id="GO:0003735">
    <property type="term" value="F:structural constituent of ribosome"/>
    <property type="evidence" value="ECO:0007669"/>
    <property type="project" value="InterPro"/>
</dbReference>
<dbReference type="GO" id="GO:0000028">
    <property type="term" value="P:ribosomal small subunit assembly"/>
    <property type="evidence" value="ECO:0007669"/>
    <property type="project" value="TreeGrafter"/>
</dbReference>
<dbReference type="GO" id="GO:0006412">
    <property type="term" value="P:translation"/>
    <property type="evidence" value="ECO:0007669"/>
    <property type="project" value="UniProtKB-UniRule"/>
</dbReference>
<dbReference type="FunFam" id="3.30.860.10:FF:000001">
    <property type="entry name" value="30S ribosomal protein S19"/>
    <property type="match status" value="1"/>
</dbReference>
<dbReference type="Gene3D" id="3.30.860.10">
    <property type="entry name" value="30s Ribosomal Protein S19, Chain A"/>
    <property type="match status" value="1"/>
</dbReference>
<dbReference type="HAMAP" id="MF_00531">
    <property type="entry name" value="Ribosomal_uS19"/>
    <property type="match status" value="1"/>
</dbReference>
<dbReference type="InterPro" id="IPR002222">
    <property type="entry name" value="Ribosomal_uS19"/>
</dbReference>
<dbReference type="InterPro" id="IPR005732">
    <property type="entry name" value="Ribosomal_uS19_bac-type"/>
</dbReference>
<dbReference type="InterPro" id="IPR020934">
    <property type="entry name" value="Ribosomal_uS19_CS"/>
</dbReference>
<dbReference type="InterPro" id="IPR023575">
    <property type="entry name" value="Ribosomal_uS19_SF"/>
</dbReference>
<dbReference type="NCBIfam" id="TIGR01050">
    <property type="entry name" value="rpsS_bact"/>
    <property type="match status" value="1"/>
</dbReference>
<dbReference type="PANTHER" id="PTHR11880">
    <property type="entry name" value="RIBOSOMAL PROTEIN S19P FAMILY MEMBER"/>
    <property type="match status" value="1"/>
</dbReference>
<dbReference type="PANTHER" id="PTHR11880:SF8">
    <property type="entry name" value="SMALL RIBOSOMAL SUBUNIT PROTEIN US19M"/>
    <property type="match status" value="1"/>
</dbReference>
<dbReference type="Pfam" id="PF00203">
    <property type="entry name" value="Ribosomal_S19"/>
    <property type="match status" value="1"/>
</dbReference>
<dbReference type="PIRSF" id="PIRSF002144">
    <property type="entry name" value="Ribosomal_S19"/>
    <property type="match status" value="1"/>
</dbReference>
<dbReference type="PRINTS" id="PR00975">
    <property type="entry name" value="RIBOSOMALS19"/>
</dbReference>
<dbReference type="SUPFAM" id="SSF54570">
    <property type="entry name" value="Ribosomal protein S19"/>
    <property type="match status" value="1"/>
</dbReference>
<dbReference type="PROSITE" id="PS00323">
    <property type="entry name" value="RIBOSOMAL_S19"/>
    <property type="match status" value="1"/>
</dbReference>
<gene>
    <name evidence="1" type="primary">rpsS</name>
    <name type="ordered locus">SPs0046</name>
</gene>
<comment type="function">
    <text evidence="1">Protein S19 forms a complex with S13 that binds strongly to the 16S ribosomal RNA.</text>
</comment>
<comment type="similarity">
    <text evidence="1">Belongs to the universal ribosomal protein uS19 family.</text>
</comment>
<feature type="chain" id="PRO_0000411531" description="Small ribosomal subunit protein uS19">
    <location>
        <begin position="1"/>
        <end position="92"/>
    </location>
</feature>
<name>RS19_STRPQ</name>
<accession>P0DE83</accession>
<accession>P66497</accession>
<accession>Q9A1X0</accession>
<organism>
    <name type="scientific">Streptococcus pyogenes serotype M3 (strain SSI-1)</name>
    <dbReference type="NCBI Taxonomy" id="193567"/>
    <lineage>
        <taxon>Bacteria</taxon>
        <taxon>Bacillati</taxon>
        <taxon>Bacillota</taxon>
        <taxon>Bacilli</taxon>
        <taxon>Lactobacillales</taxon>
        <taxon>Streptococcaceae</taxon>
        <taxon>Streptococcus</taxon>
    </lineage>
</organism>
<reference key="1">
    <citation type="journal article" date="2003" name="Genome Res.">
        <title>Genome sequence of an M3 strain of Streptococcus pyogenes reveals a large-scale genomic rearrangement in invasive strains and new insights into phage evolution.</title>
        <authorList>
            <person name="Nakagawa I."/>
            <person name="Kurokawa K."/>
            <person name="Yamashita A."/>
            <person name="Nakata M."/>
            <person name="Tomiyasu Y."/>
            <person name="Okahashi N."/>
            <person name="Kawabata S."/>
            <person name="Yamazaki K."/>
            <person name="Shiba T."/>
            <person name="Yasunaga T."/>
            <person name="Hayashi H."/>
            <person name="Hattori M."/>
            <person name="Hamada S."/>
        </authorList>
    </citation>
    <scope>NUCLEOTIDE SEQUENCE [LARGE SCALE GENOMIC DNA]</scope>
    <source>
        <strain>SSI-1</strain>
    </source>
</reference>
<sequence length="92" mass="10622">MGRSLKKGPFVDEHLMKKVEAQANDEKKKVIKTWSRRSTIFPSFIGYTIAVYDGRKHVPVYIQEDMVGHKLGEFAPTRTYKGHAADDKKTRR</sequence>
<proteinExistence type="inferred from homology"/>
<evidence type="ECO:0000255" key="1">
    <source>
        <dbReference type="HAMAP-Rule" id="MF_00531"/>
    </source>
</evidence>
<evidence type="ECO:0000305" key="2"/>
<keyword id="KW-0687">Ribonucleoprotein</keyword>
<keyword id="KW-0689">Ribosomal protein</keyword>
<keyword id="KW-0694">RNA-binding</keyword>
<keyword id="KW-0699">rRNA-binding</keyword>
<protein>
    <recommendedName>
        <fullName evidence="1">Small ribosomal subunit protein uS19</fullName>
    </recommendedName>
    <alternativeName>
        <fullName evidence="2">30S ribosomal protein S19</fullName>
    </alternativeName>
</protein>